<name>RL34_RHIWR</name>
<proteinExistence type="inferred from homology"/>
<dbReference type="EMBL" id="CP000699">
    <property type="protein sequence ID" value="ABQ69960.1"/>
    <property type="molecule type" value="Genomic_DNA"/>
</dbReference>
<dbReference type="SMR" id="A5VCE4"/>
<dbReference type="STRING" id="392499.Swit_3614"/>
<dbReference type="PaxDb" id="392499-Swit_3614"/>
<dbReference type="KEGG" id="swi:Swit_3614"/>
<dbReference type="eggNOG" id="COG0230">
    <property type="taxonomic scope" value="Bacteria"/>
</dbReference>
<dbReference type="HOGENOM" id="CLU_129938_2_0_5"/>
<dbReference type="Proteomes" id="UP000001989">
    <property type="component" value="Chromosome"/>
</dbReference>
<dbReference type="GO" id="GO:1990904">
    <property type="term" value="C:ribonucleoprotein complex"/>
    <property type="evidence" value="ECO:0007669"/>
    <property type="project" value="UniProtKB-KW"/>
</dbReference>
<dbReference type="GO" id="GO:0005840">
    <property type="term" value="C:ribosome"/>
    <property type="evidence" value="ECO:0007669"/>
    <property type="project" value="UniProtKB-KW"/>
</dbReference>
<dbReference type="GO" id="GO:0003735">
    <property type="term" value="F:structural constituent of ribosome"/>
    <property type="evidence" value="ECO:0007669"/>
    <property type="project" value="InterPro"/>
</dbReference>
<dbReference type="GO" id="GO:0006412">
    <property type="term" value="P:translation"/>
    <property type="evidence" value="ECO:0007669"/>
    <property type="project" value="UniProtKB-UniRule"/>
</dbReference>
<dbReference type="FunFam" id="1.10.287.3980:FF:000001">
    <property type="entry name" value="Mitochondrial ribosomal protein L34"/>
    <property type="match status" value="1"/>
</dbReference>
<dbReference type="Gene3D" id="1.10.287.3980">
    <property type="match status" value="1"/>
</dbReference>
<dbReference type="HAMAP" id="MF_00391">
    <property type="entry name" value="Ribosomal_bL34"/>
    <property type="match status" value="1"/>
</dbReference>
<dbReference type="InterPro" id="IPR000271">
    <property type="entry name" value="Ribosomal_bL34"/>
</dbReference>
<dbReference type="InterPro" id="IPR020939">
    <property type="entry name" value="Ribosomal_bL34_CS"/>
</dbReference>
<dbReference type="NCBIfam" id="TIGR01030">
    <property type="entry name" value="rpmH_bact"/>
    <property type="match status" value="1"/>
</dbReference>
<dbReference type="PANTHER" id="PTHR14503:SF4">
    <property type="entry name" value="LARGE RIBOSOMAL SUBUNIT PROTEIN BL34M"/>
    <property type="match status" value="1"/>
</dbReference>
<dbReference type="PANTHER" id="PTHR14503">
    <property type="entry name" value="MITOCHONDRIAL RIBOSOMAL PROTEIN 34 FAMILY MEMBER"/>
    <property type="match status" value="1"/>
</dbReference>
<dbReference type="Pfam" id="PF00468">
    <property type="entry name" value="Ribosomal_L34"/>
    <property type="match status" value="1"/>
</dbReference>
<dbReference type="PROSITE" id="PS00784">
    <property type="entry name" value="RIBOSOMAL_L34"/>
    <property type="match status" value="1"/>
</dbReference>
<organism>
    <name type="scientific">Rhizorhabdus wittichii (strain DSM 6014 / CCUG 31198 / JCM 15750 / NBRC 105917 / EY 4224 / RW1)</name>
    <name type="common">Sphingomonas wittichii</name>
    <dbReference type="NCBI Taxonomy" id="392499"/>
    <lineage>
        <taxon>Bacteria</taxon>
        <taxon>Pseudomonadati</taxon>
        <taxon>Pseudomonadota</taxon>
        <taxon>Alphaproteobacteria</taxon>
        <taxon>Sphingomonadales</taxon>
        <taxon>Sphingomonadaceae</taxon>
        <taxon>Rhizorhabdus</taxon>
    </lineage>
</organism>
<gene>
    <name evidence="1" type="primary">rpmH</name>
    <name type="ordered locus">Swit_3614</name>
</gene>
<sequence>MKRTFQPSNLVRKRRHGFRSRSATPGGRKVLAARRARGRKKLSA</sequence>
<protein>
    <recommendedName>
        <fullName evidence="1">Large ribosomal subunit protein bL34</fullName>
    </recommendedName>
    <alternativeName>
        <fullName evidence="3">50S ribosomal protein L34</fullName>
    </alternativeName>
</protein>
<evidence type="ECO:0000255" key="1">
    <source>
        <dbReference type="HAMAP-Rule" id="MF_00391"/>
    </source>
</evidence>
<evidence type="ECO:0000256" key="2">
    <source>
        <dbReference type="SAM" id="MobiDB-lite"/>
    </source>
</evidence>
<evidence type="ECO:0000305" key="3"/>
<comment type="similarity">
    <text evidence="1">Belongs to the bacterial ribosomal protein bL34 family.</text>
</comment>
<feature type="chain" id="PRO_1000013454" description="Large ribosomal subunit protein bL34">
    <location>
        <begin position="1"/>
        <end position="44"/>
    </location>
</feature>
<feature type="region of interest" description="Disordered" evidence="2">
    <location>
        <begin position="1"/>
        <end position="44"/>
    </location>
</feature>
<feature type="compositionally biased region" description="Basic residues" evidence="2">
    <location>
        <begin position="31"/>
        <end position="44"/>
    </location>
</feature>
<accession>A5VCE4</accession>
<reference key="1">
    <citation type="journal article" date="2010" name="J. Bacteriol.">
        <title>Genome sequence of the dioxin-mineralizing bacterium Sphingomonas wittichii RW1.</title>
        <authorList>
            <person name="Miller T.R."/>
            <person name="Delcher A.L."/>
            <person name="Salzberg S.L."/>
            <person name="Saunders E."/>
            <person name="Detter J.C."/>
            <person name="Halden R.U."/>
        </authorList>
    </citation>
    <scope>NUCLEOTIDE SEQUENCE [LARGE SCALE GENOMIC DNA]</scope>
    <source>
        <strain>DSM 6014 / CCUG 31198 / JCM 15750 / NBRC 105917 / EY 4224 / RW1</strain>
    </source>
</reference>
<keyword id="KW-1185">Reference proteome</keyword>
<keyword id="KW-0687">Ribonucleoprotein</keyword>
<keyword id="KW-0689">Ribosomal protein</keyword>